<organism>
    <name type="scientific">Uncinocarpus reesii (strain UAMH 1704)</name>
    <dbReference type="NCBI Taxonomy" id="336963"/>
    <lineage>
        <taxon>Eukaryota</taxon>
        <taxon>Fungi</taxon>
        <taxon>Dikarya</taxon>
        <taxon>Ascomycota</taxon>
        <taxon>Pezizomycotina</taxon>
        <taxon>Eurotiomycetes</taxon>
        <taxon>Eurotiomycetidae</taxon>
        <taxon>Onygenales</taxon>
        <taxon>Onygenaceae</taxon>
        <taxon>Uncinocarpus</taxon>
    </lineage>
</organism>
<gene>
    <name evidence="1" type="primary">COQ4</name>
    <name type="ORF">UREG_00480</name>
</gene>
<evidence type="ECO:0000255" key="1">
    <source>
        <dbReference type="HAMAP-Rule" id="MF_03111"/>
    </source>
</evidence>
<protein>
    <recommendedName>
        <fullName evidence="1">Ubiquinone biosynthesis protein COQ4, mitochondrial</fullName>
    </recommendedName>
    <alternativeName>
        <fullName>4-hydroxy-3-methoxy-5-polyprenylbenzoate decarboxylase</fullName>
        <ecNumber evidence="1">4.1.1.130</ecNumber>
    </alternativeName>
    <alternativeName>
        <fullName evidence="1">Coenzyme Q biosynthesis protein 4</fullName>
    </alternativeName>
</protein>
<name>COQ4_UNCRE</name>
<accession>C4JE58</accession>
<comment type="function">
    <text evidence="1">Lyase that catalyzes the C1-decarboxylation of 4-hydroxy-3-methoxy-5-(all-trans-polyprenyl)benzoic acid into 2-methoxy-6-(all-trans-polyprenyl)phenol during ubiquinone biosynthesis.</text>
</comment>
<comment type="catalytic activity">
    <reaction evidence="1">
        <text>a 4-hydroxy-3-methoxy-5-(all-trans-polyprenyl)benzoate + H(+) = a 2-methoxy-6-(all-trans-polyprenyl)phenol + CO2</text>
        <dbReference type="Rhea" id="RHEA:81179"/>
        <dbReference type="Rhea" id="RHEA-COMP:9551"/>
        <dbReference type="Rhea" id="RHEA-COMP:10931"/>
        <dbReference type="ChEBI" id="CHEBI:15378"/>
        <dbReference type="ChEBI" id="CHEBI:16526"/>
        <dbReference type="ChEBI" id="CHEBI:62731"/>
        <dbReference type="ChEBI" id="CHEBI:84443"/>
        <dbReference type="EC" id="4.1.1.130"/>
    </reaction>
</comment>
<comment type="cofactor">
    <cofactor evidence="1">
        <name>Zn(2+)</name>
        <dbReference type="ChEBI" id="CHEBI:29105"/>
    </cofactor>
</comment>
<comment type="pathway">
    <text evidence="1">Cofactor biosynthesis; ubiquinone biosynthesis.</text>
</comment>
<comment type="subunit">
    <text evidence="1">Component of a multi-subunit COQ enzyme complex, composed of at least COQ3, COQ4, COQ5, COQ6, COQ7 and COQ9.</text>
</comment>
<comment type="subcellular location">
    <subcellularLocation>
        <location evidence="1">Mitochondrion inner membrane</location>
        <topology evidence="1">Peripheral membrane protein</topology>
        <orientation evidence="1">Matrix side</orientation>
    </subcellularLocation>
</comment>
<comment type="similarity">
    <text evidence="1">Belongs to the COQ4 family.</text>
</comment>
<dbReference type="EC" id="4.1.1.130" evidence="1"/>
<dbReference type="EMBL" id="CH476615">
    <property type="protein sequence ID" value="EEP75634.1"/>
    <property type="molecule type" value="Genomic_DNA"/>
</dbReference>
<dbReference type="RefSeq" id="XP_002540967.1">
    <property type="nucleotide sequence ID" value="XM_002540921.1"/>
</dbReference>
<dbReference type="SMR" id="C4JE58"/>
<dbReference type="FunCoup" id="C4JE58">
    <property type="interactions" value="453"/>
</dbReference>
<dbReference type="STRING" id="336963.C4JE58"/>
<dbReference type="GeneID" id="8437278"/>
<dbReference type="KEGG" id="ure:UREG_00480"/>
<dbReference type="VEuPathDB" id="FungiDB:UREG_00480"/>
<dbReference type="eggNOG" id="KOG3244">
    <property type="taxonomic scope" value="Eukaryota"/>
</dbReference>
<dbReference type="HOGENOM" id="CLU_061241_0_0_1"/>
<dbReference type="InParanoid" id="C4JE58"/>
<dbReference type="OMA" id="YYERHFH"/>
<dbReference type="OrthoDB" id="4249at2759"/>
<dbReference type="UniPathway" id="UPA00232"/>
<dbReference type="Proteomes" id="UP000002058">
    <property type="component" value="Unassembled WGS sequence"/>
</dbReference>
<dbReference type="GO" id="GO:0031314">
    <property type="term" value="C:extrinsic component of mitochondrial inner membrane"/>
    <property type="evidence" value="ECO:0007669"/>
    <property type="project" value="UniProtKB-UniRule"/>
</dbReference>
<dbReference type="GO" id="GO:0006744">
    <property type="term" value="P:ubiquinone biosynthetic process"/>
    <property type="evidence" value="ECO:0007669"/>
    <property type="project" value="UniProtKB-UniRule"/>
</dbReference>
<dbReference type="HAMAP" id="MF_03111">
    <property type="entry name" value="Coq4"/>
    <property type="match status" value="1"/>
</dbReference>
<dbReference type="InterPro" id="IPR007715">
    <property type="entry name" value="Coq4"/>
</dbReference>
<dbReference type="InterPro" id="IPR027540">
    <property type="entry name" value="Coq4_euk"/>
</dbReference>
<dbReference type="PANTHER" id="PTHR12922">
    <property type="entry name" value="UBIQUINONE BIOSYNTHESIS PROTEIN"/>
    <property type="match status" value="1"/>
</dbReference>
<dbReference type="PANTHER" id="PTHR12922:SF7">
    <property type="entry name" value="UBIQUINONE BIOSYNTHESIS PROTEIN COQ4 HOMOLOG, MITOCHONDRIAL"/>
    <property type="match status" value="1"/>
</dbReference>
<dbReference type="Pfam" id="PF05019">
    <property type="entry name" value="Coq4"/>
    <property type="match status" value="1"/>
</dbReference>
<feature type="transit peptide" description="Mitochondrion" evidence="1">
    <location>
        <begin position="1"/>
        <end position="28"/>
    </location>
</feature>
<feature type="chain" id="PRO_0000388140" description="Ubiquinone biosynthesis protein COQ4, mitochondrial">
    <location>
        <begin position="29"/>
        <end position="278"/>
    </location>
</feature>
<feature type="binding site" evidence="1">
    <location>
        <position position="164"/>
    </location>
    <ligand>
        <name>Zn(2+)</name>
        <dbReference type="ChEBI" id="CHEBI:29105"/>
    </ligand>
</feature>
<feature type="binding site" evidence="1">
    <location>
        <position position="165"/>
    </location>
    <ligand>
        <name>Zn(2+)</name>
        <dbReference type="ChEBI" id="CHEBI:29105"/>
    </ligand>
</feature>
<feature type="binding site" evidence="1">
    <location>
        <position position="168"/>
    </location>
    <ligand>
        <name>Zn(2+)</name>
        <dbReference type="ChEBI" id="CHEBI:29105"/>
    </ligand>
</feature>
<feature type="binding site" evidence="1">
    <location>
        <position position="180"/>
    </location>
    <ligand>
        <name>Zn(2+)</name>
        <dbReference type="ChEBI" id="CHEBI:29105"/>
    </ligand>
</feature>
<keyword id="KW-0456">Lyase</keyword>
<keyword id="KW-0472">Membrane</keyword>
<keyword id="KW-0479">Metal-binding</keyword>
<keyword id="KW-0496">Mitochondrion</keyword>
<keyword id="KW-0999">Mitochondrion inner membrane</keyword>
<keyword id="KW-1185">Reference proteome</keyword>
<keyword id="KW-0809">Transit peptide</keyword>
<keyword id="KW-0831">Ubiquinone biosynthesis</keyword>
<keyword id="KW-0862">Zinc</keyword>
<reference key="1">
    <citation type="journal article" date="2009" name="Genome Res.">
        <title>Comparative genomic analyses of the human fungal pathogens Coccidioides and their relatives.</title>
        <authorList>
            <person name="Sharpton T.J."/>
            <person name="Stajich J.E."/>
            <person name="Rounsley S.D."/>
            <person name="Gardner M.J."/>
            <person name="Wortman J.R."/>
            <person name="Jordar V.S."/>
            <person name="Maiti R."/>
            <person name="Kodira C.D."/>
            <person name="Neafsey D.E."/>
            <person name="Zeng Q."/>
            <person name="Hung C.-Y."/>
            <person name="McMahan C."/>
            <person name="Muszewska A."/>
            <person name="Grynberg M."/>
            <person name="Mandel M.A."/>
            <person name="Kellner E.M."/>
            <person name="Barker B.M."/>
            <person name="Galgiani J.N."/>
            <person name="Orbach M.J."/>
            <person name="Kirkland T.N."/>
            <person name="Cole G.T."/>
            <person name="Henn M.R."/>
            <person name="Birren B.W."/>
            <person name="Taylor J.W."/>
        </authorList>
    </citation>
    <scope>NUCLEOTIDE SEQUENCE [LARGE SCALE GENOMIC DNA]</scope>
    <source>
        <strain>UAMH 1704</strain>
    </source>
</reference>
<sequence>MATPTSVRIAGFRSLQALCAQRTVTRNFSLLNRPAPNYPGHIPLTPVERGVLAIGSAVGSLLNPRRGDLIATLGETTATPFFIYRLRDAMLSNPTGRRILRDRPRITSQTLSLPYLRSLPPNTVGYTYAAWLDREGVSPDTRSSVQYIDDEECAYVMQRYRECHDFYHAVTGLPIMVEGEIALKAFEFLNTLIPMTGLSVFAAVRLKPEERQRFWSIHLPWAVRSGLASKELINVYWEEQLERDVNELREELNIEKPPDLRDIRKKLREQKRAARRQQ</sequence>
<proteinExistence type="inferred from homology"/>